<keyword id="KW-0328">Glycosyltransferase</keyword>
<keyword id="KW-0808">Transferase</keyword>
<sequence>MPTLHIKSEKNAFSNIVLMPGDPVRAKYIAENYLANPVQINDTRLMLAYTGYYKNKKISVMSHGMGIPSASLYVRELILEYNVKKIIRVGTCGTIQNNIKLRDIVISMGASTDSKINRIRFNNHDYAAIADFEMIFHAFSTAKKMNFKVHIGNFFTTDSFYTESEDMLKILKKYNIIGIDMETAGIYAVAAELKAQALSICTVSDHIIKKDAVSSKDRESSFHNMITLSLETTLLL</sequence>
<comment type="function">
    <text evidence="2">Catalyzes the reversible phosphorolytic breakdown of the N-glycosidic bond in the beta-(deoxy)ribonucleoside molecules, with the formation of the corresponding free purine bases and pentose-1-phosphate.</text>
</comment>
<comment type="catalytic activity">
    <reaction evidence="2">
        <text>a purine D-ribonucleoside + phosphate = a purine nucleobase + alpha-D-ribose 1-phosphate</text>
        <dbReference type="Rhea" id="RHEA:19805"/>
        <dbReference type="ChEBI" id="CHEBI:26386"/>
        <dbReference type="ChEBI" id="CHEBI:43474"/>
        <dbReference type="ChEBI" id="CHEBI:57720"/>
        <dbReference type="ChEBI" id="CHEBI:142355"/>
        <dbReference type="EC" id="2.4.2.1"/>
    </reaction>
</comment>
<comment type="catalytic activity">
    <reaction evidence="2">
        <text>a purine 2'-deoxy-D-ribonucleoside + phosphate = a purine nucleobase + 2-deoxy-alpha-D-ribose 1-phosphate</text>
        <dbReference type="Rhea" id="RHEA:36431"/>
        <dbReference type="ChEBI" id="CHEBI:26386"/>
        <dbReference type="ChEBI" id="CHEBI:43474"/>
        <dbReference type="ChEBI" id="CHEBI:57259"/>
        <dbReference type="ChEBI" id="CHEBI:142361"/>
        <dbReference type="EC" id="2.4.2.1"/>
    </reaction>
</comment>
<comment type="subunit">
    <text evidence="2">Homohexamer; trimer of homodimers.</text>
</comment>
<comment type="similarity">
    <text evidence="2">Belongs to the PNP/UDP phosphorylase family.</text>
</comment>
<reference key="1">
    <citation type="journal article" date="2002" name="Science">
        <title>50 million years of genomic stasis in endosymbiotic bacteria.</title>
        <authorList>
            <person name="Tamas I."/>
            <person name="Klasson L."/>
            <person name="Canbaeck B."/>
            <person name="Naeslund A.K."/>
            <person name="Eriksson A.-S."/>
            <person name="Wernegreen J.J."/>
            <person name="Sandstroem J.P."/>
            <person name="Moran N.A."/>
            <person name="Andersson S.G.E."/>
        </authorList>
    </citation>
    <scope>NUCLEOTIDE SEQUENCE [LARGE SCALE GENOMIC DNA]</scope>
    <source>
        <strain>Sg</strain>
    </source>
</reference>
<feature type="chain" id="PRO_0000063125" description="Purine nucleoside phosphorylase DeoD-type">
    <location>
        <begin position="1"/>
        <end position="236"/>
    </location>
</feature>
<feature type="active site" description="Proton donor" evidence="2">
    <location>
        <position position="205"/>
    </location>
</feature>
<feature type="binding site" evidence="1">
    <location>
        <position position="5"/>
    </location>
    <ligand>
        <name>a purine D-ribonucleoside</name>
        <dbReference type="ChEBI" id="CHEBI:142355"/>
        <note>ligand shared between dimeric partners</note>
    </ligand>
</feature>
<feature type="binding site" description="in other chain" evidence="1">
    <location>
        <position position="21"/>
    </location>
    <ligand>
        <name>phosphate</name>
        <dbReference type="ChEBI" id="CHEBI:43474"/>
        <note>ligand shared between dimeric partners</note>
    </ligand>
</feature>
<feature type="binding site" description="in other chain" evidence="1">
    <location>
        <position position="25"/>
    </location>
    <ligand>
        <name>phosphate</name>
        <dbReference type="ChEBI" id="CHEBI:43474"/>
        <note>ligand shared between dimeric partners</note>
    </ligand>
</feature>
<feature type="binding site" evidence="1">
    <location>
        <position position="44"/>
    </location>
    <ligand>
        <name>phosphate</name>
        <dbReference type="ChEBI" id="CHEBI:43474"/>
        <note>ligand shared between dimeric partners</note>
    </ligand>
</feature>
<feature type="binding site" description="in other chain" evidence="1">
    <location>
        <begin position="88"/>
        <end position="91"/>
    </location>
    <ligand>
        <name>phosphate</name>
        <dbReference type="ChEBI" id="CHEBI:43474"/>
        <note>ligand shared between dimeric partners</note>
    </ligand>
</feature>
<feature type="binding site" description="in other chain" evidence="1">
    <location>
        <begin position="180"/>
        <end position="182"/>
    </location>
    <ligand>
        <name>a purine D-ribonucleoside</name>
        <dbReference type="ChEBI" id="CHEBI:142355"/>
        <note>ligand shared between dimeric partners</note>
    </ligand>
</feature>
<feature type="binding site" description="in other chain" evidence="1">
    <location>
        <begin position="204"/>
        <end position="205"/>
    </location>
    <ligand>
        <name>a purine D-ribonucleoside</name>
        <dbReference type="ChEBI" id="CHEBI:142355"/>
        <note>ligand shared between dimeric partners</note>
    </ligand>
</feature>
<feature type="site" description="Important for catalytic activity" evidence="2">
    <location>
        <position position="218"/>
    </location>
</feature>
<protein>
    <recommendedName>
        <fullName evidence="2">Purine nucleoside phosphorylase DeoD-type</fullName>
        <shortName evidence="2">PNP</shortName>
        <ecNumber evidence="2">2.4.2.1</ecNumber>
    </recommendedName>
</protein>
<proteinExistence type="inferred from homology"/>
<accession>Q8K937</accession>
<evidence type="ECO:0000250" key="1">
    <source>
        <dbReference type="UniProtKB" id="P50389"/>
    </source>
</evidence>
<evidence type="ECO:0000255" key="2">
    <source>
        <dbReference type="HAMAP-Rule" id="MF_01627"/>
    </source>
</evidence>
<name>DEOD_BUCAP</name>
<organism>
    <name type="scientific">Buchnera aphidicola subsp. Schizaphis graminum (strain Sg)</name>
    <dbReference type="NCBI Taxonomy" id="198804"/>
    <lineage>
        <taxon>Bacteria</taxon>
        <taxon>Pseudomonadati</taxon>
        <taxon>Pseudomonadota</taxon>
        <taxon>Gammaproteobacteria</taxon>
        <taxon>Enterobacterales</taxon>
        <taxon>Erwiniaceae</taxon>
        <taxon>Buchnera</taxon>
    </lineage>
</organism>
<gene>
    <name evidence="2" type="primary">deoD</name>
    <name type="ordered locus">BUsg_521</name>
</gene>
<dbReference type="EC" id="2.4.2.1" evidence="2"/>
<dbReference type="EMBL" id="AE013218">
    <property type="protein sequence ID" value="AAM68064.1"/>
    <property type="molecule type" value="Genomic_DNA"/>
</dbReference>
<dbReference type="RefSeq" id="WP_011054030.1">
    <property type="nucleotide sequence ID" value="NC_004061.1"/>
</dbReference>
<dbReference type="SMR" id="Q8K937"/>
<dbReference type="STRING" id="198804.BUsg_521"/>
<dbReference type="GeneID" id="93003997"/>
<dbReference type="KEGG" id="bas:BUsg_521"/>
<dbReference type="eggNOG" id="COG0813">
    <property type="taxonomic scope" value="Bacteria"/>
</dbReference>
<dbReference type="HOGENOM" id="CLU_068457_2_0_6"/>
<dbReference type="Proteomes" id="UP000000416">
    <property type="component" value="Chromosome"/>
</dbReference>
<dbReference type="GO" id="GO:0005829">
    <property type="term" value="C:cytosol"/>
    <property type="evidence" value="ECO:0007669"/>
    <property type="project" value="TreeGrafter"/>
</dbReference>
<dbReference type="GO" id="GO:0004731">
    <property type="term" value="F:purine-nucleoside phosphorylase activity"/>
    <property type="evidence" value="ECO:0007669"/>
    <property type="project" value="UniProtKB-UniRule"/>
</dbReference>
<dbReference type="GO" id="GO:0006152">
    <property type="term" value="P:purine nucleoside catabolic process"/>
    <property type="evidence" value="ECO:0007669"/>
    <property type="project" value="TreeGrafter"/>
</dbReference>
<dbReference type="CDD" id="cd09006">
    <property type="entry name" value="PNP_EcPNPI-like"/>
    <property type="match status" value="1"/>
</dbReference>
<dbReference type="Gene3D" id="3.40.50.1580">
    <property type="entry name" value="Nucleoside phosphorylase domain"/>
    <property type="match status" value="1"/>
</dbReference>
<dbReference type="HAMAP" id="MF_01627">
    <property type="entry name" value="Pur_nucleosid_phosp"/>
    <property type="match status" value="1"/>
</dbReference>
<dbReference type="InterPro" id="IPR004402">
    <property type="entry name" value="DeoD-type"/>
</dbReference>
<dbReference type="InterPro" id="IPR018016">
    <property type="entry name" value="Nucleoside_phosphorylase_CS"/>
</dbReference>
<dbReference type="InterPro" id="IPR000845">
    <property type="entry name" value="Nucleoside_phosphorylase_d"/>
</dbReference>
<dbReference type="InterPro" id="IPR035994">
    <property type="entry name" value="Nucleoside_phosphorylase_sf"/>
</dbReference>
<dbReference type="NCBIfam" id="TIGR00107">
    <property type="entry name" value="deoD"/>
    <property type="match status" value="1"/>
</dbReference>
<dbReference type="NCBIfam" id="NF004489">
    <property type="entry name" value="PRK05819.1"/>
    <property type="match status" value="1"/>
</dbReference>
<dbReference type="PANTHER" id="PTHR43691:SF11">
    <property type="entry name" value="FI09636P-RELATED"/>
    <property type="match status" value="1"/>
</dbReference>
<dbReference type="PANTHER" id="PTHR43691">
    <property type="entry name" value="URIDINE PHOSPHORYLASE"/>
    <property type="match status" value="1"/>
</dbReference>
<dbReference type="Pfam" id="PF01048">
    <property type="entry name" value="PNP_UDP_1"/>
    <property type="match status" value="1"/>
</dbReference>
<dbReference type="SUPFAM" id="SSF53167">
    <property type="entry name" value="Purine and uridine phosphorylases"/>
    <property type="match status" value="1"/>
</dbReference>
<dbReference type="PROSITE" id="PS01232">
    <property type="entry name" value="PNP_UDP_1"/>
    <property type="match status" value="1"/>
</dbReference>